<dbReference type="EMBL" id="AF494278">
    <property type="protein sequence ID" value="AAM96513.1"/>
    <property type="molecule type" value="Genomic_DNA"/>
</dbReference>
<dbReference type="RefSeq" id="NP_683835.1">
    <property type="nucleotide sequence ID" value="NC_004115.1"/>
</dbReference>
<dbReference type="SMR" id="Q8M9V4"/>
<dbReference type="GeneID" id="860796"/>
<dbReference type="GO" id="GO:0009507">
    <property type="term" value="C:chloroplast"/>
    <property type="evidence" value="ECO:0007669"/>
    <property type="project" value="UniProtKB-SubCell"/>
</dbReference>
<dbReference type="GO" id="GO:0005829">
    <property type="term" value="C:cytosol"/>
    <property type="evidence" value="ECO:0007669"/>
    <property type="project" value="TreeGrafter"/>
</dbReference>
<dbReference type="GO" id="GO:0043022">
    <property type="term" value="F:ribosome binding"/>
    <property type="evidence" value="ECO:0007669"/>
    <property type="project" value="UniProtKB-UniRule"/>
</dbReference>
<dbReference type="GO" id="GO:0019843">
    <property type="term" value="F:rRNA binding"/>
    <property type="evidence" value="ECO:0007669"/>
    <property type="project" value="UniProtKB-UniRule"/>
</dbReference>
<dbReference type="GO" id="GO:0003743">
    <property type="term" value="F:translation initiation factor activity"/>
    <property type="evidence" value="ECO:0007669"/>
    <property type="project" value="UniProtKB-UniRule"/>
</dbReference>
<dbReference type="CDD" id="cd04451">
    <property type="entry name" value="S1_IF1"/>
    <property type="match status" value="1"/>
</dbReference>
<dbReference type="FunFam" id="2.40.50.140:FF:000002">
    <property type="entry name" value="Translation initiation factor IF-1"/>
    <property type="match status" value="1"/>
</dbReference>
<dbReference type="Gene3D" id="2.40.50.140">
    <property type="entry name" value="Nucleic acid-binding proteins"/>
    <property type="match status" value="1"/>
</dbReference>
<dbReference type="HAMAP" id="MF_00075">
    <property type="entry name" value="IF_1"/>
    <property type="match status" value="1"/>
</dbReference>
<dbReference type="InterPro" id="IPR012340">
    <property type="entry name" value="NA-bd_OB-fold"/>
</dbReference>
<dbReference type="InterPro" id="IPR006196">
    <property type="entry name" value="RNA-binding_domain_S1_IF1"/>
</dbReference>
<dbReference type="InterPro" id="IPR003029">
    <property type="entry name" value="S1_domain"/>
</dbReference>
<dbReference type="InterPro" id="IPR004368">
    <property type="entry name" value="TIF_IF1"/>
</dbReference>
<dbReference type="NCBIfam" id="TIGR00008">
    <property type="entry name" value="infA"/>
    <property type="match status" value="1"/>
</dbReference>
<dbReference type="PANTHER" id="PTHR33370">
    <property type="entry name" value="TRANSLATION INITIATION FACTOR IF-1, CHLOROPLASTIC"/>
    <property type="match status" value="1"/>
</dbReference>
<dbReference type="PANTHER" id="PTHR33370:SF1">
    <property type="entry name" value="TRANSLATION INITIATION FACTOR IF-1, CHLOROPLASTIC"/>
    <property type="match status" value="1"/>
</dbReference>
<dbReference type="Pfam" id="PF01176">
    <property type="entry name" value="eIF-1a"/>
    <property type="match status" value="1"/>
</dbReference>
<dbReference type="SMART" id="SM00316">
    <property type="entry name" value="S1"/>
    <property type="match status" value="1"/>
</dbReference>
<dbReference type="SUPFAM" id="SSF50249">
    <property type="entry name" value="Nucleic acid-binding proteins"/>
    <property type="match status" value="1"/>
</dbReference>
<dbReference type="PROSITE" id="PS50832">
    <property type="entry name" value="S1_IF1_TYPE"/>
    <property type="match status" value="1"/>
</dbReference>
<name>IF1C_CHAGL</name>
<comment type="function">
    <text evidence="1">One of the essential components for the initiation of protein synthesis. Stabilizes the binding of IF-2 and IF-3 on the 30S subunit to which N-formylmethionyl-tRNA(fMet) subsequently binds. Helps modulate mRNA selection, yielding the 30S pre-initiation complex (PIC). Upon addition of the 50S ribosomal subunit IF-1, IF-2 and IF-3 are released leaving the mature 70S translation initiation complex.</text>
</comment>
<comment type="subunit">
    <text evidence="1">Component of the 30S ribosomal translation pre-initiation complex which assembles on the 30S ribosome in the order IF-2 and IF-3, IF-1 and N-formylmethionyl-tRNA(fMet); mRNA recruitment can occur at any time during PIC assembly.</text>
</comment>
<comment type="subcellular location">
    <subcellularLocation>
        <location evidence="1">Plastid</location>
        <location evidence="1">Chloroplast</location>
    </subcellularLocation>
</comment>
<comment type="similarity">
    <text evidence="1">Belongs to the IF-1 family.</text>
</comment>
<gene>
    <name evidence="1" type="primary">infA</name>
</gene>
<organism>
    <name type="scientific">Chaetosphaeridium globosum</name>
    <name type="common">Charophycean green alga</name>
    <name type="synonym">Herposteiron globosum</name>
    <dbReference type="NCBI Taxonomy" id="96477"/>
    <lineage>
        <taxon>Eukaryota</taxon>
        <taxon>Viridiplantae</taxon>
        <taxon>Streptophyta</taxon>
        <taxon>Coleochaetophyceae</taxon>
        <taxon>Coleochaetales</taxon>
        <taxon>Chaetosphaeridiaceae</taxon>
        <taxon>Chaetosphaeridium</taxon>
    </lineage>
</organism>
<accession>Q8M9V4</accession>
<feature type="chain" id="PRO_0000095925" description="Translation initiation factor IF-1, chloroplastic">
    <location>
        <begin position="1"/>
        <end position="78"/>
    </location>
</feature>
<feature type="domain" description="S1-like" evidence="1">
    <location>
        <begin position="1"/>
        <end position="72"/>
    </location>
</feature>
<evidence type="ECO:0000255" key="1">
    <source>
        <dbReference type="HAMAP-Rule" id="MF_00075"/>
    </source>
</evidence>
<proteinExistence type="inferred from homology"/>
<protein>
    <recommendedName>
        <fullName evidence="1">Translation initiation factor IF-1, chloroplastic</fullName>
    </recommendedName>
</protein>
<geneLocation type="chloroplast"/>
<keyword id="KW-0150">Chloroplast</keyword>
<keyword id="KW-0396">Initiation factor</keyword>
<keyword id="KW-0934">Plastid</keyword>
<keyword id="KW-0648">Protein biosynthesis</keyword>
<keyword id="KW-0694">RNA-binding</keyword>
<keyword id="KW-0699">rRNA-binding</keyword>
<reference key="1">
    <citation type="journal article" date="2002" name="Proc. Natl. Acad. Sci. U.S.A.">
        <title>The chloroplast and mitochondrial genome sequences of the charophyte Chaetosphaeridium globosum: insights into the timing of the events that restructured organelle DNAs within the green algal lineage that led to land plants.</title>
        <authorList>
            <person name="Turmel M."/>
            <person name="Otis C."/>
            <person name="Lemieux C."/>
        </authorList>
    </citation>
    <scope>NUCLEOTIDE SEQUENCE [LARGE SCALE GENOMIC DNA]</scope>
    <source>
        <strain>M1311</strain>
    </source>
</reference>
<sequence>MKKQNLIEMEGIVTESLPNAMFRVSLDNGCQVLAHISGKIRRNYIRILPGDKVKVELSPYDLTKGRITYRLRMKTTNG</sequence>